<feature type="chain" id="PRO_0000097059" description="Protein PsaF">
    <location>
        <begin position="1"/>
        <end position="162"/>
    </location>
</feature>
<proteinExistence type="predicted"/>
<protein>
    <recommendedName>
        <fullName>Protein PsaF</fullName>
    </recommendedName>
</protein>
<organism>
    <name type="scientific">Yersinia pestis</name>
    <dbReference type="NCBI Taxonomy" id="632"/>
    <lineage>
        <taxon>Bacteria</taxon>
        <taxon>Pseudomonadati</taxon>
        <taxon>Pseudomonadota</taxon>
        <taxon>Gammaproteobacteria</taxon>
        <taxon>Enterobacterales</taxon>
        <taxon>Yersiniaceae</taxon>
        <taxon>Yersinia</taxon>
    </lineage>
</organism>
<evidence type="ECO:0000305" key="1"/>
<comment type="sequence caution" evidence="1">
    <conflict type="erroneous initiation">
        <sequence resource="EMBL-CDS" id="AAM86434"/>
    </conflict>
</comment>
<comment type="sequence caution" evidence="1">
    <conflict type="erroneous initiation">
        <sequence resource="EMBL-CDS" id="AAS61533"/>
    </conflict>
</comment>
<dbReference type="EMBL" id="X97759">
    <property type="protein sequence ID" value="CAA66354.1"/>
    <property type="molecule type" value="Genomic_DNA"/>
</dbReference>
<dbReference type="EMBL" id="EF079883">
    <property type="protein sequence ID" value="ABK63796.1"/>
    <property type="molecule type" value="Genomic_DNA"/>
</dbReference>
<dbReference type="EMBL" id="AL590842">
    <property type="protein sequence ID" value="CAL19955.1"/>
    <property type="molecule type" value="Genomic_DNA"/>
</dbReference>
<dbReference type="EMBL" id="AE009952">
    <property type="protein sequence ID" value="AAM86434.1"/>
    <property type="status" value="ALT_INIT"/>
    <property type="molecule type" value="Genomic_DNA"/>
</dbReference>
<dbReference type="EMBL" id="AE017042">
    <property type="protein sequence ID" value="AAS61533.1"/>
    <property type="status" value="ALT_INIT"/>
    <property type="molecule type" value="Genomic_DNA"/>
</dbReference>
<dbReference type="PIR" id="AI0158">
    <property type="entry name" value="AI0158"/>
</dbReference>
<dbReference type="RefSeq" id="WP_002216523.1">
    <property type="nucleotide sequence ID" value="NZ_WUCM01000013.1"/>
</dbReference>
<dbReference type="RefSeq" id="YP_002346327.1">
    <property type="nucleotide sequence ID" value="NC_003143.1"/>
</dbReference>
<dbReference type="STRING" id="214092.YPO1302"/>
<dbReference type="PaxDb" id="214092-YPO1302"/>
<dbReference type="DNASU" id="1147830"/>
<dbReference type="EnsemblBacteria" id="AAS61533">
    <property type="protein sequence ID" value="AAS61533"/>
    <property type="gene ID" value="YP_1290"/>
</dbReference>
<dbReference type="KEGG" id="ype:YPO1302"/>
<dbReference type="KEGG" id="ypk:y2883"/>
<dbReference type="KEGG" id="ypm:YP_1290"/>
<dbReference type="PATRIC" id="fig|214092.21.peg.1612"/>
<dbReference type="eggNOG" id="ENOG5031CVM">
    <property type="taxonomic scope" value="Bacteria"/>
</dbReference>
<dbReference type="HOGENOM" id="CLU_135525_0_0_6"/>
<dbReference type="OMA" id="PNTEHID"/>
<dbReference type="OrthoDB" id="6480253at2"/>
<dbReference type="Proteomes" id="UP000000815">
    <property type="component" value="Chromosome"/>
</dbReference>
<dbReference type="Proteomes" id="UP000001019">
    <property type="component" value="Chromosome"/>
</dbReference>
<dbReference type="Proteomes" id="UP000002490">
    <property type="component" value="Chromosome"/>
</dbReference>
<dbReference type="InterPro" id="IPR035182">
    <property type="entry name" value="PsaF"/>
</dbReference>
<dbReference type="Pfam" id="PF17550">
    <property type="entry name" value="PsaF"/>
    <property type="match status" value="1"/>
</dbReference>
<gene>
    <name type="primary">psaF</name>
    <name type="ordered locus">YPO1302</name>
    <name type="ordered locus">y2883</name>
    <name type="ordered locus">YP_1290</name>
</gene>
<keyword id="KW-1185">Reference proteome</keyword>
<accession>Q56978</accession>
<accession>Q0WHB1</accession>
<sequence length="162" mass="18529">MKAKSLTLISITVMFFLFLIYSFNDLFFYSEVKYGDIHEHLDLRMQGIRFSLSHYIIDDKSQLVISEGIYGIGLKMPTGKYYLFPLHSYQSSPDNMARGSLNSLASPLSLYVYEIHNKKNNVVTFFNGDRGFIDVNGETIHLSSLFLGVQGEHIHTSYHDVS</sequence>
<reference key="1">
    <citation type="submission" date="1996-05" db="EMBL/GenBank/DDBJ databases">
        <authorList>
            <person name="Cherepavov P.A."/>
        </authorList>
    </citation>
    <scope>NUCLEOTIDE SEQUENCE [GENOMIC DNA]</scope>
    <source>
        <strain>EV 76</strain>
    </source>
</reference>
<reference key="2">
    <citation type="submission" date="2006-10" db="EMBL/GenBank/DDBJ databases">
        <title>Yersinia pestis DNA for pH6 antigen.</title>
        <authorList>
            <person name="Bannov V.A."/>
            <person name="Panfertsev E.A."/>
            <person name="Amoako K.K."/>
            <person name="Perry R.D."/>
            <person name="Filippov A.A."/>
            <person name="Anisimov A.P."/>
        </authorList>
    </citation>
    <scope>NUCLEOTIDE SEQUENCE [GENOMIC DNA]</scope>
    <source>
        <strain>231</strain>
    </source>
</reference>
<reference key="3">
    <citation type="journal article" date="2001" name="Nature">
        <title>Genome sequence of Yersinia pestis, the causative agent of plague.</title>
        <authorList>
            <person name="Parkhill J."/>
            <person name="Wren B.W."/>
            <person name="Thomson N.R."/>
            <person name="Titball R.W."/>
            <person name="Holden M.T.G."/>
            <person name="Prentice M.B."/>
            <person name="Sebaihia M."/>
            <person name="James K.D."/>
            <person name="Churcher C.M."/>
            <person name="Mungall K.L."/>
            <person name="Baker S."/>
            <person name="Basham D."/>
            <person name="Bentley S.D."/>
            <person name="Brooks K."/>
            <person name="Cerdeno-Tarraga A.-M."/>
            <person name="Chillingworth T."/>
            <person name="Cronin A."/>
            <person name="Davies R.M."/>
            <person name="Davis P."/>
            <person name="Dougan G."/>
            <person name="Feltwell T."/>
            <person name="Hamlin N."/>
            <person name="Holroyd S."/>
            <person name="Jagels K."/>
            <person name="Karlyshev A.V."/>
            <person name="Leather S."/>
            <person name="Moule S."/>
            <person name="Oyston P.C.F."/>
            <person name="Quail M.A."/>
            <person name="Rutherford K.M."/>
            <person name="Simmonds M."/>
            <person name="Skelton J."/>
            <person name="Stevens K."/>
            <person name="Whitehead S."/>
            <person name="Barrell B.G."/>
        </authorList>
    </citation>
    <scope>NUCLEOTIDE SEQUENCE [LARGE SCALE GENOMIC DNA]</scope>
    <source>
        <strain>CO-92 / Biovar Orientalis</strain>
    </source>
</reference>
<reference key="4">
    <citation type="journal article" date="2002" name="J. Bacteriol.">
        <title>Genome sequence of Yersinia pestis KIM.</title>
        <authorList>
            <person name="Deng W."/>
            <person name="Burland V."/>
            <person name="Plunkett G. III"/>
            <person name="Boutin A."/>
            <person name="Mayhew G.F."/>
            <person name="Liss P."/>
            <person name="Perna N.T."/>
            <person name="Rose D.J."/>
            <person name="Mau B."/>
            <person name="Zhou S."/>
            <person name="Schwartz D.C."/>
            <person name="Fetherston J.D."/>
            <person name="Lindler L.E."/>
            <person name="Brubaker R.R."/>
            <person name="Plano G.V."/>
            <person name="Straley S.C."/>
            <person name="McDonough K.A."/>
            <person name="Nilles M.L."/>
            <person name="Matson J.S."/>
            <person name="Blattner F.R."/>
            <person name="Perry R.D."/>
        </authorList>
    </citation>
    <scope>NUCLEOTIDE SEQUENCE [LARGE SCALE GENOMIC DNA]</scope>
    <source>
        <strain>KIM10+ / Biovar Mediaevalis</strain>
    </source>
</reference>
<reference key="5">
    <citation type="journal article" date="2004" name="DNA Res.">
        <title>Complete genome sequence of Yersinia pestis strain 91001, an isolate avirulent to humans.</title>
        <authorList>
            <person name="Song Y."/>
            <person name="Tong Z."/>
            <person name="Wang J."/>
            <person name="Wang L."/>
            <person name="Guo Z."/>
            <person name="Han Y."/>
            <person name="Zhang J."/>
            <person name="Pei D."/>
            <person name="Zhou D."/>
            <person name="Qin H."/>
            <person name="Pang X."/>
            <person name="Han Y."/>
            <person name="Zhai J."/>
            <person name="Li M."/>
            <person name="Cui B."/>
            <person name="Qi Z."/>
            <person name="Jin L."/>
            <person name="Dai R."/>
            <person name="Chen F."/>
            <person name="Li S."/>
            <person name="Ye C."/>
            <person name="Du Z."/>
            <person name="Lin W."/>
            <person name="Wang J."/>
            <person name="Yu J."/>
            <person name="Yang H."/>
            <person name="Wang J."/>
            <person name="Huang P."/>
            <person name="Yang R."/>
        </authorList>
    </citation>
    <scope>NUCLEOTIDE SEQUENCE [LARGE SCALE GENOMIC DNA]</scope>
    <source>
        <strain>91001 / Biovar Mediaevalis</strain>
    </source>
</reference>
<name>PSAF_YERPE</name>